<sequence length="577" mass="67121">MEKDIYEKIMDLAKRRGYLWSSFEIYGGIAGFVDYGPLGCLLKNNIISKFREQYIIKEGFYEIESPTVTPYEVLKASGHVDNFTDPIVECKNCLESFRADHLIEEFVDVDTEGKTLKELDELIRKHNIRCPKCGGELGEVKKFNLMFVTSIGPGGKRTGYMRPETAQGIFIQFRRLAQFFRNKLPFGVVQIGKSYRNEISPRQGVIRLREFTQAEIEYFVHPERKEHEKFDLVKDEVVPLLPAERQMDENLSDDEKVIKISIGEAVEKGIIRHQTIAYFIALTKRFLEAIGIDKDKIRFRQHLPNEMAHYAIDCWDAEIYTERFGWIECVGIADRTDYDLRSHSAHSGVELSVFVELDEEREIETYEINLNYKVVGKIFKKDTKAIEAYINNLSEKEKEEFVKNIENDGKVIINIDGKEFEILKDYVEIKKVKKVIKGEKVIPHVIEPSYGIDRITYCLLEHSYREEEDRVYLDLKPSIAPIKAYVLPLVNKDDMPKIAKEIEQMLRENGIIAEYDDSGAIGRRYMRADEIGVPFCITVDGQTLEDRTVTVRERNTREQVRVKIDELVDYLKERLKE</sequence>
<proteinExistence type="inferred from homology"/>
<reference key="1">
    <citation type="journal article" date="1996" name="Science">
        <title>Complete genome sequence of the methanogenic archaeon, Methanococcus jannaschii.</title>
        <authorList>
            <person name="Bult C.J."/>
            <person name="White O."/>
            <person name="Olsen G.J."/>
            <person name="Zhou L."/>
            <person name="Fleischmann R.D."/>
            <person name="Sutton G.G."/>
            <person name="Blake J.A."/>
            <person name="FitzGerald L.M."/>
            <person name="Clayton R.A."/>
            <person name="Gocayne J.D."/>
            <person name="Kerlavage A.R."/>
            <person name="Dougherty B.A."/>
            <person name="Tomb J.-F."/>
            <person name="Adams M.D."/>
            <person name="Reich C.I."/>
            <person name="Overbeek R."/>
            <person name="Kirkness E.F."/>
            <person name="Weinstock K.G."/>
            <person name="Merrick J.M."/>
            <person name="Glodek A."/>
            <person name="Scott J.L."/>
            <person name="Geoghagen N.S.M."/>
            <person name="Weidman J.F."/>
            <person name="Fuhrmann J.L."/>
            <person name="Nguyen D."/>
            <person name="Utterback T.R."/>
            <person name="Kelley J.M."/>
            <person name="Peterson J.D."/>
            <person name="Sadow P.W."/>
            <person name="Hanna M.C."/>
            <person name="Cotton M.D."/>
            <person name="Roberts K.M."/>
            <person name="Hurst M.A."/>
            <person name="Kaine B.P."/>
            <person name="Borodovsky M."/>
            <person name="Klenk H.-P."/>
            <person name="Fraser C.M."/>
            <person name="Smith H.O."/>
            <person name="Woese C.R."/>
            <person name="Venter J.C."/>
        </authorList>
    </citation>
    <scope>NUCLEOTIDE SEQUENCE [LARGE SCALE GENOMIC DNA]</scope>
    <source>
        <strain>ATCC 43067 / DSM 2661 / JAL-1 / JCM 10045 / NBRC 100440</strain>
    </source>
</reference>
<dbReference type="EC" id="6.1.1.14" evidence="1"/>
<dbReference type="EMBL" id="L77117">
    <property type="protein sequence ID" value="AAB98213.1"/>
    <property type="molecule type" value="Genomic_DNA"/>
</dbReference>
<dbReference type="PIR" id="E64328">
    <property type="entry name" value="E64328"/>
</dbReference>
<dbReference type="RefSeq" id="WP_010869726.1">
    <property type="nucleotide sequence ID" value="NC_000909.1"/>
</dbReference>
<dbReference type="SMR" id="Q57681"/>
<dbReference type="FunCoup" id="Q57681">
    <property type="interactions" value="223"/>
</dbReference>
<dbReference type="STRING" id="243232.MJ_0228"/>
<dbReference type="PaxDb" id="243232-MJ_0228"/>
<dbReference type="EnsemblBacteria" id="AAB98213">
    <property type="protein sequence ID" value="AAB98213"/>
    <property type="gene ID" value="MJ_0228"/>
</dbReference>
<dbReference type="GeneID" id="1451081"/>
<dbReference type="KEGG" id="mja:MJ_0228"/>
<dbReference type="eggNOG" id="arCOG00405">
    <property type="taxonomic scope" value="Archaea"/>
</dbReference>
<dbReference type="HOGENOM" id="CLU_015515_1_0_2"/>
<dbReference type="InParanoid" id="Q57681"/>
<dbReference type="OrthoDB" id="6113at2157"/>
<dbReference type="PhylomeDB" id="Q57681"/>
<dbReference type="Proteomes" id="UP000000805">
    <property type="component" value="Chromosome"/>
</dbReference>
<dbReference type="GO" id="GO:0005737">
    <property type="term" value="C:cytoplasm"/>
    <property type="evidence" value="ECO:0000318"/>
    <property type="project" value="GO_Central"/>
</dbReference>
<dbReference type="GO" id="GO:0005524">
    <property type="term" value="F:ATP binding"/>
    <property type="evidence" value="ECO:0007669"/>
    <property type="project" value="UniProtKB-UniRule"/>
</dbReference>
<dbReference type="GO" id="GO:0004820">
    <property type="term" value="F:glycine-tRNA ligase activity"/>
    <property type="evidence" value="ECO:0000250"/>
    <property type="project" value="UniProtKB"/>
</dbReference>
<dbReference type="GO" id="GO:0046983">
    <property type="term" value="F:protein dimerization activity"/>
    <property type="evidence" value="ECO:0000250"/>
    <property type="project" value="UniProtKB"/>
</dbReference>
<dbReference type="GO" id="GO:0006426">
    <property type="term" value="P:glycyl-tRNA aminoacylation"/>
    <property type="evidence" value="ECO:0000318"/>
    <property type="project" value="GO_Central"/>
</dbReference>
<dbReference type="CDD" id="cd00774">
    <property type="entry name" value="GlyRS-like_core"/>
    <property type="match status" value="1"/>
</dbReference>
<dbReference type="CDD" id="cd00858">
    <property type="entry name" value="GlyRS_anticodon"/>
    <property type="match status" value="1"/>
</dbReference>
<dbReference type="FunFam" id="3.30.40.230:FF:000005">
    <property type="entry name" value="Glycine--tRNA ligase"/>
    <property type="match status" value="1"/>
</dbReference>
<dbReference type="FunFam" id="3.40.50.800:FF:000002">
    <property type="entry name" value="Glycine--tRNA ligase"/>
    <property type="match status" value="1"/>
</dbReference>
<dbReference type="FunFam" id="3.30.720.200:FF:000001">
    <property type="entry name" value="Glycine--tRNA ligase 2"/>
    <property type="match status" value="1"/>
</dbReference>
<dbReference type="FunFam" id="3.30.930.10:FF:000010">
    <property type="entry name" value="Glycyl-tRNA synthetase 1"/>
    <property type="match status" value="1"/>
</dbReference>
<dbReference type="Gene3D" id="3.30.40.230">
    <property type="match status" value="1"/>
</dbReference>
<dbReference type="Gene3D" id="3.30.720.200">
    <property type="match status" value="1"/>
</dbReference>
<dbReference type="Gene3D" id="3.40.50.800">
    <property type="entry name" value="Anticodon-binding domain"/>
    <property type="match status" value="1"/>
</dbReference>
<dbReference type="Gene3D" id="3.30.930.10">
    <property type="entry name" value="Bira Bifunctional Protein, Domain 2"/>
    <property type="match status" value="1"/>
</dbReference>
<dbReference type="HAMAP" id="MF_00253_A">
    <property type="entry name" value="Gly_tRNA_synth_A"/>
    <property type="match status" value="1"/>
</dbReference>
<dbReference type="InterPro" id="IPR002314">
    <property type="entry name" value="aa-tRNA-synt_IIb"/>
</dbReference>
<dbReference type="InterPro" id="IPR006195">
    <property type="entry name" value="aa-tRNA-synth_II"/>
</dbReference>
<dbReference type="InterPro" id="IPR045864">
    <property type="entry name" value="aa-tRNA-synth_II/BPL/LPL"/>
</dbReference>
<dbReference type="InterPro" id="IPR004154">
    <property type="entry name" value="Anticodon-bd"/>
</dbReference>
<dbReference type="InterPro" id="IPR036621">
    <property type="entry name" value="Anticodon-bd_dom_sf"/>
</dbReference>
<dbReference type="InterPro" id="IPR027031">
    <property type="entry name" value="Gly-tRNA_synthase/POLG2"/>
</dbReference>
<dbReference type="InterPro" id="IPR022960">
    <property type="entry name" value="Gly_tRNA_ligase_arc"/>
</dbReference>
<dbReference type="InterPro" id="IPR033731">
    <property type="entry name" value="GlyRS-like_core"/>
</dbReference>
<dbReference type="InterPro" id="IPR002315">
    <property type="entry name" value="tRNA-synt_gly"/>
</dbReference>
<dbReference type="NCBIfam" id="TIGR00389">
    <property type="entry name" value="glyS_dimeric"/>
    <property type="match status" value="1"/>
</dbReference>
<dbReference type="NCBIfam" id="NF003211">
    <property type="entry name" value="PRK04173.1"/>
    <property type="match status" value="1"/>
</dbReference>
<dbReference type="PANTHER" id="PTHR10745:SF0">
    <property type="entry name" value="GLYCINE--TRNA LIGASE"/>
    <property type="match status" value="1"/>
</dbReference>
<dbReference type="PANTHER" id="PTHR10745">
    <property type="entry name" value="GLYCYL-TRNA SYNTHETASE/DNA POLYMERASE SUBUNIT GAMMA-2"/>
    <property type="match status" value="1"/>
</dbReference>
<dbReference type="Pfam" id="PF03129">
    <property type="entry name" value="HGTP_anticodon"/>
    <property type="match status" value="1"/>
</dbReference>
<dbReference type="Pfam" id="PF00587">
    <property type="entry name" value="tRNA-synt_2b"/>
    <property type="match status" value="1"/>
</dbReference>
<dbReference type="PRINTS" id="PR01043">
    <property type="entry name" value="TRNASYNTHGLY"/>
</dbReference>
<dbReference type="SUPFAM" id="SSF52954">
    <property type="entry name" value="Class II aaRS ABD-related"/>
    <property type="match status" value="1"/>
</dbReference>
<dbReference type="SUPFAM" id="SSF55681">
    <property type="entry name" value="Class II aaRS and biotin synthetases"/>
    <property type="match status" value="1"/>
</dbReference>
<dbReference type="PROSITE" id="PS50862">
    <property type="entry name" value="AA_TRNA_LIGASE_II"/>
    <property type="match status" value="1"/>
</dbReference>
<accession>Q57681</accession>
<feature type="chain" id="PRO_0000072990" description="Glycine--tRNA ligase">
    <location>
        <begin position="1"/>
        <end position="577"/>
    </location>
</feature>
<feature type="binding site" evidence="1">
    <location>
        <position position="98"/>
    </location>
    <ligand>
        <name>substrate</name>
    </ligand>
</feature>
<feature type="binding site" evidence="1">
    <location>
        <position position="164"/>
    </location>
    <ligand>
        <name>substrate</name>
    </ligand>
</feature>
<feature type="binding site" evidence="1">
    <location>
        <begin position="196"/>
        <end position="198"/>
    </location>
    <ligand>
        <name>ATP</name>
        <dbReference type="ChEBI" id="CHEBI:30616"/>
    </ligand>
</feature>
<feature type="binding site" evidence="1">
    <location>
        <begin position="206"/>
        <end position="211"/>
    </location>
    <ligand>
        <name>ATP</name>
        <dbReference type="ChEBI" id="CHEBI:30616"/>
    </ligand>
</feature>
<feature type="binding site" evidence="1">
    <location>
        <begin position="211"/>
        <end position="215"/>
    </location>
    <ligand>
        <name>substrate</name>
    </ligand>
</feature>
<feature type="binding site" evidence="1">
    <location>
        <begin position="328"/>
        <end position="329"/>
    </location>
    <ligand>
        <name>ATP</name>
        <dbReference type="ChEBI" id="CHEBI:30616"/>
    </ligand>
</feature>
<feature type="binding site" evidence="1">
    <location>
        <begin position="447"/>
        <end position="451"/>
    </location>
    <ligand>
        <name>substrate</name>
    </ligand>
</feature>
<feature type="binding site" evidence="1">
    <location>
        <begin position="451"/>
        <end position="454"/>
    </location>
    <ligand>
        <name>ATP</name>
        <dbReference type="ChEBI" id="CHEBI:30616"/>
    </ligand>
</feature>
<keyword id="KW-0030">Aminoacyl-tRNA synthetase</keyword>
<keyword id="KW-0067">ATP-binding</keyword>
<keyword id="KW-0963">Cytoplasm</keyword>
<keyword id="KW-0436">Ligase</keyword>
<keyword id="KW-0547">Nucleotide-binding</keyword>
<keyword id="KW-0648">Protein biosynthesis</keyword>
<keyword id="KW-1185">Reference proteome</keyword>
<evidence type="ECO:0000255" key="1">
    <source>
        <dbReference type="HAMAP-Rule" id="MF_00253"/>
    </source>
</evidence>
<comment type="function">
    <text evidence="1">Catalyzes the attachment of glycine to tRNA(Gly).</text>
</comment>
<comment type="catalytic activity">
    <reaction evidence="1">
        <text>tRNA(Gly) + glycine + ATP = glycyl-tRNA(Gly) + AMP + diphosphate</text>
        <dbReference type="Rhea" id="RHEA:16013"/>
        <dbReference type="Rhea" id="RHEA-COMP:9664"/>
        <dbReference type="Rhea" id="RHEA-COMP:9683"/>
        <dbReference type="ChEBI" id="CHEBI:30616"/>
        <dbReference type="ChEBI" id="CHEBI:33019"/>
        <dbReference type="ChEBI" id="CHEBI:57305"/>
        <dbReference type="ChEBI" id="CHEBI:78442"/>
        <dbReference type="ChEBI" id="CHEBI:78522"/>
        <dbReference type="ChEBI" id="CHEBI:456215"/>
        <dbReference type="EC" id="6.1.1.14"/>
    </reaction>
</comment>
<comment type="subcellular location">
    <subcellularLocation>
        <location evidence="1">Cytoplasm</location>
    </subcellularLocation>
</comment>
<comment type="similarity">
    <text evidence="1">Belongs to the class-II aminoacyl-tRNA synthetase family.</text>
</comment>
<gene>
    <name evidence="1" type="primary">glyS</name>
    <name type="ordered locus">MJ0228</name>
</gene>
<name>SYG_METJA</name>
<organism>
    <name type="scientific">Methanocaldococcus jannaschii (strain ATCC 43067 / DSM 2661 / JAL-1 / JCM 10045 / NBRC 100440)</name>
    <name type="common">Methanococcus jannaschii</name>
    <dbReference type="NCBI Taxonomy" id="243232"/>
    <lineage>
        <taxon>Archaea</taxon>
        <taxon>Methanobacteriati</taxon>
        <taxon>Methanobacteriota</taxon>
        <taxon>Methanomada group</taxon>
        <taxon>Methanococci</taxon>
        <taxon>Methanococcales</taxon>
        <taxon>Methanocaldococcaceae</taxon>
        <taxon>Methanocaldococcus</taxon>
    </lineage>
</organism>
<protein>
    <recommendedName>
        <fullName evidence="1">Glycine--tRNA ligase</fullName>
        <ecNumber evidence="1">6.1.1.14</ecNumber>
    </recommendedName>
    <alternativeName>
        <fullName evidence="1">Glycyl-tRNA synthetase</fullName>
        <shortName evidence="1">GlyRS</shortName>
    </alternativeName>
</protein>